<accession>A4QKF4</accession>
<protein>
    <recommendedName>
        <fullName>NAD(P)H-quinone oxidoreductase subunit 5, chloroplastic</fullName>
        <ecNumber>7.1.1.-</ecNumber>
    </recommendedName>
    <alternativeName>
        <fullName>NAD(P)H dehydrogenase subunit 5</fullName>
    </alternativeName>
    <alternativeName>
        <fullName>NADH-plastoquinone oxidoreductase subunit 5</fullName>
    </alternativeName>
</protein>
<organism>
    <name type="scientific">Barbarea verna</name>
    <name type="common">Land cress</name>
    <name type="synonym">Erysimum vernum</name>
    <dbReference type="NCBI Taxonomy" id="50458"/>
    <lineage>
        <taxon>Eukaryota</taxon>
        <taxon>Viridiplantae</taxon>
        <taxon>Streptophyta</taxon>
        <taxon>Embryophyta</taxon>
        <taxon>Tracheophyta</taxon>
        <taxon>Spermatophyta</taxon>
        <taxon>Magnoliopsida</taxon>
        <taxon>eudicotyledons</taxon>
        <taxon>Gunneridae</taxon>
        <taxon>Pentapetalae</taxon>
        <taxon>rosids</taxon>
        <taxon>malvids</taxon>
        <taxon>Brassicales</taxon>
        <taxon>Brassicaceae</taxon>
        <taxon>Cardamineae</taxon>
        <taxon>Barbarea</taxon>
    </lineage>
</organism>
<reference key="1">
    <citation type="submission" date="2007-03" db="EMBL/GenBank/DDBJ databases">
        <title>Sequencing analysis of Barbarea verna chloroplast DNA.</title>
        <authorList>
            <person name="Hosouchi T."/>
            <person name="Tsuruoka H."/>
            <person name="Kotani H."/>
        </authorList>
    </citation>
    <scope>NUCLEOTIDE SEQUENCE [LARGE SCALE GENOMIC DNA]</scope>
</reference>
<keyword id="KW-0150">Chloroplast</keyword>
<keyword id="KW-0472">Membrane</keyword>
<keyword id="KW-0520">NAD</keyword>
<keyword id="KW-0521">NADP</keyword>
<keyword id="KW-0934">Plastid</keyword>
<keyword id="KW-0618">Plastoquinone</keyword>
<keyword id="KW-0874">Quinone</keyword>
<keyword id="KW-0793">Thylakoid</keyword>
<keyword id="KW-1278">Translocase</keyword>
<keyword id="KW-0812">Transmembrane</keyword>
<keyword id="KW-1133">Transmembrane helix</keyword>
<keyword id="KW-0813">Transport</keyword>
<feature type="chain" id="PRO_0000360912" description="NAD(P)H-quinone oxidoreductase subunit 5, chloroplastic">
    <location>
        <begin position="1"/>
        <end position="746"/>
    </location>
</feature>
<feature type="transmembrane region" description="Helical" evidence="2">
    <location>
        <begin position="9"/>
        <end position="29"/>
    </location>
</feature>
<feature type="transmembrane region" description="Helical" evidence="2">
    <location>
        <begin position="40"/>
        <end position="60"/>
    </location>
</feature>
<feature type="transmembrane region" description="Helical" evidence="2">
    <location>
        <begin position="89"/>
        <end position="109"/>
    </location>
</feature>
<feature type="transmembrane region" description="Helical" evidence="2">
    <location>
        <begin position="125"/>
        <end position="145"/>
    </location>
</feature>
<feature type="transmembrane region" description="Helical" evidence="2">
    <location>
        <begin position="147"/>
        <end position="167"/>
    </location>
</feature>
<feature type="transmembrane region" description="Helical" evidence="2">
    <location>
        <begin position="185"/>
        <end position="205"/>
    </location>
</feature>
<feature type="transmembrane region" description="Helical" evidence="2">
    <location>
        <begin position="221"/>
        <end position="241"/>
    </location>
</feature>
<feature type="transmembrane region" description="Helical" evidence="2">
    <location>
        <begin position="258"/>
        <end position="278"/>
    </location>
</feature>
<feature type="transmembrane region" description="Helical" evidence="2">
    <location>
        <begin position="280"/>
        <end position="300"/>
    </location>
</feature>
<feature type="transmembrane region" description="Helical" evidence="2">
    <location>
        <begin position="327"/>
        <end position="347"/>
    </location>
</feature>
<feature type="transmembrane region" description="Helical" evidence="2">
    <location>
        <begin position="354"/>
        <end position="374"/>
    </location>
</feature>
<feature type="transmembrane region" description="Helical" evidence="2">
    <location>
        <begin position="396"/>
        <end position="416"/>
    </location>
</feature>
<feature type="transmembrane region" description="Helical" evidence="2">
    <location>
        <begin position="425"/>
        <end position="445"/>
    </location>
</feature>
<feature type="transmembrane region" description="Helical" evidence="2">
    <location>
        <begin position="547"/>
        <end position="567"/>
    </location>
</feature>
<feature type="transmembrane region" description="Helical" evidence="2">
    <location>
        <begin position="608"/>
        <end position="628"/>
    </location>
</feature>
<feature type="transmembrane region" description="Helical" evidence="2">
    <location>
        <begin position="723"/>
        <end position="743"/>
    </location>
</feature>
<sequence>MEHTYQYSWIIPFIPLPVPILLGVGLLLFPTATKNLRRMWTFLSIFLLSIVMIFALYLSIQQIILSCIHQNVWSWTINNEFSFEFGYFIDPLTSIMSILITTVGILVLIYSDNYMSHDQGYLRFFAYMGFFNTSMLGLVTSSNLIQVYFFWELVGMCSYLLIGFWFTRPIAANACQKAFVTNRVGDFGLLLGILGLYWITGSFEFQDLFEIFNNLILNNRVNFLFLTLCAFLLFVGPIAKSAQFPLHVWLPDAMEGPTPISALIHAATMVAAGIFLVARLLPLFIVIPSIMYIISLIGIITVLLGATLALAQKDIKRGLAYSTMSQLGYMMLALGMGSYRSALFHLITHAYSKALLFLGSGSIIHSMEAIVGYSPDKSQNMILMGGLTKHVPITKTAFLVGTLSLCGIPPLACFWSKDEILNDSLLFSPIFAIIACSTAGLTAFYMFRIYLLTFEGHLNTYFINYSGKKSSSFYSISLWGKEEEKKLNRNFGLVPLLTMNNTKRASFFYKKTYKISNNVRNQTFITVENFGLNTRTFYYPQESDNTILFPMLVLLLFTLFIGAIGIPFNQEGIDFDILSKLFTPSINLLHKNSQSFVDWYEFLRNATFSVSIAFFGIFIAYCLYKPFYSSLLNLTLLNSFQKWNSKRIRWEKLINFVYNWSYNRGYIDAFFKTSLIESIRRLAKLTNFFDKRIIDGITNGVGITSFFVGEVTKYIGGSRVSSYLFLYLSYVLIFLTILFFFYFEKF</sequence>
<name>NU5C_BARVE</name>
<comment type="function">
    <text evidence="1">NDH shuttles electrons from NAD(P)H:plastoquinone, via FMN and iron-sulfur (Fe-S) centers, to quinones in the photosynthetic chain and possibly in a chloroplast respiratory chain. The immediate electron acceptor for the enzyme in this species is believed to be plastoquinone. Couples the redox reaction to proton translocation, and thus conserves the redox energy in a proton gradient (By similarity).</text>
</comment>
<comment type="catalytic activity">
    <reaction>
        <text>a plastoquinone + NADH + (n+1) H(+)(in) = a plastoquinol + NAD(+) + n H(+)(out)</text>
        <dbReference type="Rhea" id="RHEA:42608"/>
        <dbReference type="Rhea" id="RHEA-COMP:9561"/>
        <dbReference type="Rhea" id="RHEA-COMP:9562"/>
        <dbReference type="ChEBI" id="CHEBI:15378"/>
        <dbReference type="ChEBI" id="CHEBI:17757"/>
        <dbReference type="ChEBI" id="CHEBI:57540"/>
        <dbReference type="ChEBI" id="CHEBI:57945"/>
        <dbReference type="ChEBI" id="CHEBI:62192"/>
    </reaction>
</comment>
<comment type="catalytic activity">
    <reaction>
        <text>a plastoquinone + NADPH + (n+1) H(+)(in) = a plastoquinol + NADP(+) + n H(+)(out)</text>
        <dbReference type="Rhea" id="RHEA:42612"/>
        <dbReference type="Rhea" id="RHEA-COMP:9561"/>
        <dbReference type="Rhea" id="RHEA-COMP:9562"/>
        <dbReference type="ChEBI" id="CHEBI:15378"/>
        <dbReference type="ChEBI" id="CHEBI:17757"/>
        <dbReference type="ChEBI" id="CHEBI:57783"/>
        <dbReference type="ChEBI" id="CHEBI:58349"/>
        <dbReference type="ChEBI" id="CHEBI:62192"/>
    </reaction>
</comment>
<comment type="subunit">
    <text evidence="1">NDH is composed of at least 16 different subunits, 5 of which are encoded in the nucleus.</text>
</comment>
<comment type="subcellular location">
    <subcellularLocation>
        <location evidence="1">Plastid</location>
        <location evidence="1">Chloroplast thylakoid membrane</location>
        <topology evidence="1">Multi-pass membrane protein</topology>
    </subcellularLocation>
</comment>
<comment type="similarity">
    <text evidence="3">Belongs to the complex I subunit 5 family.</text>
</comment>
<gene>
    <name type="primary">ndhF</name>
</gene>
<proteinExistence type="inferred from homology"/>
<dbReference type="EC" id="7.1.1.-"/>
<dbReference type="EMBL" id="AP009370">
    <property type="protein sequence ID" value="BAF50159.1"/>
    <property type="molecule type" value="Genomic_DNA"/>
</dbReference>
<dbReference type="RefSeq" id="YP_001123334.1">
    <property type="nucleotide sequence ID" value="NC_009269.1"/>
</dbReference>
<dbReference type="SMR" id="A4QKF4"/>
<dbReference type="GeneID" id="4961921"/>
<dbReference type="GO" id="GO:0009535">
    <property type="term" value="C:chloroplast thylakoid membrane"/>
    <property type="evidence" value="ECO:0007669"/>
    <property type="project" value="UniProtKB-SubCell"/>
</dbReference>
<dbReference type="GO" id="GO:0008137">
    <property type="term" value="F:NADH dehydrogenase (ubiquinone) activity"/>
    <property type="evidence" value="ECO:0007669"/>
    <property type="project" value="InterPro"/>
</dbReference>
<dbReference type="GO" id="GO:0048038">
    <property type="term" value="F:quinone binding"/>
    <property type="evidence" value="ECO:0007669"/>
    <property type="project" value="UniProtKB-KW"/>
</dbReference>
<dbReference type="GO" id="GO:0042773">
    <property type="term" value="P:ATP synthesis coupled electron transport"/>
    <property type="evidence" value="ECO:0007669"/>
    <property type="project" value="InterPro"/>
</dbReference>
<dbReference type="GO" id="GO:0015990">
    <property type="term" value="P:electron transport coupled proton transport"/>
    <property type="evidence" value="ECO:0007669"/>
    <property type="project" value="TreeGrafter"/>
</dbReference>
<dbReference type="Gene3D" id="1.20.5.2700">
    <property type="match status" value="1"/>
</dbReference>
<dbReference type="InterPro" id="IPR002128">
    <property type="entry name" value="NADH_UbQ_OxRdtase_chlpt_su5_C"/>
</dbReference>
<dbReference type="InterPro" id="IPR018393">
    <property type="entry name" value="NADHpl_OxRdtase_5_subgr"/>
</dbReference>
<dbReference type="InterPro" id="IPR001750">
    <property type="entry name" value="ND/Mrp_TM"/>
</dbReference>
<dbReference type="InterPro" id="IPR003945">
    <property type="entry name" value="NU5C-like"/>
</dbReference>
<dbReference type="InterPro" id="IPR001516">
    <property type="entry name" value="Proton_antipo_N"/>
</dbReference>
<dbReference type="NCBIfam" id="TIGR01974">
    <property type="entry name" value="NDH_I_L"/>
    <property type="match status" value="1"/>
</dbReference>
<dbReference type="NCBIfam" id="NF005141">
    <property type="entry name" value="PRK06590.1"/>
    <property type="match status" value="1"/>
</dbReference>
<dbReference type="PANTHER" id="PTHR42829">
    <property type="entry name" value="NADH-UBIQUINONE OXIDOREDUCTASE CHAIN 5"/>
    <property type="match status" value="1"/>
</dbReference>
<dbReference type="PANTHER" id="PTHR42829:SF2">
    <property type="entry name" value="NADH-UBIQUINONE OXIDOREDUCTASE CHAIN 5"/>
    <property type="match status" value="1"/>
</dbReference>
<dbReference type="Pfam" id="PF01010">
    <property type="entry name" value="Proton_antipo_C"/>
    <property type="match status" value="1"/>
</dbReference>
<dbReference type="Pfam" id="PF00361">
    <property type="entry name" value="Proton_antipo_M"/>
    <property type="match status" value="1"/>
</dbReference>
<dbReference type="Pfam" id="PF00662">
    <property type="entry name" value="Proton_antipo_N"/>
    <property type="match status" value="1"/>
</dbReference>
<dbReference type="PRINTS" id="PR01434">
    <property type="entry name" value="NADHDHGNASE5"/>
</dbReference>
<dbReference type="PRINTS" id="PR01435">
    <property type="entry name" value="NPOXDRDTASE5"/>
</dbReference>
<evidence type="ECO:0000250" key="1"/>
<evidence type="ECO:0000255" key="2"/>
<evidence type="ECO:0000305" key="3"/>
<geneLocation type="chloroplast"/>